<feature type="chain" id="PRO_0000187136" description="2-dehydro-3-deoxyphosphooctonate aldolase">
    <location>
        <begin position="1"/>
        <end position="274"/>
    </location>
</feature>
<feature type="strand" evidence="2">
    <location>
        <begin position="1"/>
        <end position="3"/>
    </location>
</feature>
<feature type="strand" evidence="2">
    <location>
        <begin position="6"/>
        <end position="9"/>
    </location>
</feature>
<feature type="strand" evidence="2">
    <location>
        <begin position="15"/>
        <end position="19"/>
    </location>
</feature>
<feature type="helix" evidence="2">
    <location>
        <begin position="26"/>
        <end position="42"/>
    </location>
</feature>
<feature type="strand" evidence="2">
    <location>
        <begin position="47"/>
        <end position="50"/>
    </location>
</feature>
<feature type="helix" evidence="2">
    <location>
        <begin position="61"/>
        <end position="63"/>
    </location>
</feature>
<feature type="helix" evidence="2">
    <location>
        <begin position="69"/>
        <end position="82"/>
    </location>
</feature>
<feature type="strand" evidence="2">
    <location>
        <begin position="87"/>
        <end position="90"/>
    </location>
</feature>
<feature type="helix" evidence="2">
    <location>
        <begin position="97"/>
        <end position="101"/>
    </location>
</feature>
<feature type="strand" evidence="2">
    <location>
        <begin position="105"/>
        <end position="109"/>
    </location>
</feature>
<feature type="helix" evidence="2">
    <location>
        <begin position="111"/>
        <end position="113"/>
    </location>
</feature>
<feature type="helix" evidence="2">
    <location>
        <begin position="117"/>
        <end position="124"/>
    </location>
</feature>
<feature type="strand" evidence="2">
    <location>
        <begin position="130"/>
        <end position="133"/>
    </location>
</feature>
<feature type="helix" evidence="2">
    <location>
        <begin position="142"/>
        <end position="151"/>
    </location>
</feature>
<feature type="strand" evidence="2">
    <location>
        <begin position="158"/>
        <end position="162"/>
    </location>
</feature>
<feature type="strand" evidence="2">
    <location>
        <begin position="168"/>
        <end position="170"/>
    </location>
</feature>
<feature type="helix" evidence="2">
    <location>
        <begin position="177"/>
        <end position="181"/>
    </location>
</feature>
<feature type="helix" evidence="2">
    <location>
        <begin position="182"/>
        <end position="185"/>
    </location>
</feature>
<feature type="strand" evidence="2">
    <location>
        <begin position="189"/>
        <end position="192"/>
    </location>
</feature>
<feature type="turn" evidence="2">
    <location>
        <begin position="193"/>
        <end position="195"/>
    </location>
</feature>
<feature type="helix" evidence="2">
    <location>
        <begin position="213"/>
        <end position="224"/>
    </location>
</feature>
<feature type="strand" evidence="2">
    <location>
        <begin position="227"/>
        <end position="234"/>
    </location>
</feature>
<feature type="helix" evidence="2">
    <location>
        <begin position="250"/>
        <end position="252"/>
    </location>
</feature>
<feature type="helix" evidence="2">
    <location>
        <begin position="253"/>
        <end position="270"/>
    </location>
</feature>
<sequence>MRLCGFEAGLDKPLFLIAGPCVIESEELALETAGYLKEMCSQLNIPFIYKSSFDKANRSSISSYRGPGFEKGLSILEKVKSQIGVPVLTDVHEDTPLFEVSSVVDVLQTPAFLCRQTNFIQKVAAMNKPVNIKKGQFLAPWEMKHVIAKAKAQGNEQIMACERGVSFGYNNLVSDMRSLVIMRETGCPVVYDATHSVQLPGGNNGVSGGQREFIPALARAAVAVGISGLFMETHPDPDKALSDGPNSWPLDKMKQLLESLKAADEVYKKYSTDF</sequence>
<reference key="1">
    <citation type="journal article" date="2004" name="Science">
        <title>The genomic sequence of the accidental pathogen Legionella pneumophila.</title>
        <authorList>
            <person name="Chien M."/>
            <person name="Morozova I."/>
            <person name="Shi S."/>
            <person name="Sheng H."/>
            <person name="Chen J."/>
            <person name="Gomez S.M."/>
            <person name="Asamani G."/>
            <person name="Hill K."/>
            <person name="Nuara J."/>
            <person name="Feder M."/>
            <person name="Rineer J."/>
            <person name="Greenberg J.J."/>
            <person name="Steshenko V."/>
            <person name="Park S.H."/>
            <person name="Zhao B."/>
            <person name="Teplitskaya E."/>
            <person name="Edwards J.R."/>
            <person name="Pampou S."/>
            <person name="Georghiou A."/>
            <person name="Chou I.-C."/>
            <person name="Iannuccilli W."/>
            <person name="Ulz M.E."/>
            <person name="Kim D.H."/>
            <person name="Geringer-Sameth A."/>
            <person name="Goldsberry C."/>
            <person name="Morozov P."/>
            <person name="Fischer S.G."/>
            <person name="Segal G."/>
            <person name="Qu X."/>
            <person name="Rzhetsky A."/>
            <person name="Zhang P."/>
            <person name="Cayanis E."/>
            <person name="De Jong P.J."/>
            <person name="Ju J."/>
            <person name="Kalachikov S."/>
            <person name="Shuman H.A."/>
            <person name="Russo J.J."/>
        </authorList>
    </citation>
    <scope>NUCLEOTIDE SEQUENCE [LARGE SCALE GENOMIC DNA]</scope>
    <source>
        <strain>Philadelphia 1 / ATCC 33152 / DSM 7513</strain>
    </source>
</reference>
<proteinExistence type="evidence at protein level"/>
<comment type="catalytic activity">
    <reaction evidence="1">
        <text>D-arabinose 5-phosphate + phosphoenolpyruvate + H2O = 3-deoxy-alpha-D-manno-2-octulosonate-8-phosphate + phosphate</text>
        <dbReference type="Rhea" id="RHEA:14053"/>
        <dbReference type="ChEBI" id="CHEBI:15377"/>
        <dbReference type="ChEBI" id="CHEBI:43474"/>
        <dbReference type="ChEBI" id="CHEBI:57693"/>
        <dbReference type="ChEBI" id="CHEBI:58702"/>
        <dbReference type="ChEBI" id="CHEBI:85985"/>
        <dbReference type="EC" id="2.5.1.55"/>
    </reaction>
</comment>
<comment type="pathway">
    <text evidence="1">Carbohydrate biosynthesis; 3-deoxy-D-manno-octulosonate biosynthesis; 3-deoxy-D-manno-octulosonate from D-ribulose 5-phosphate: step 2/3.</text>
</comment>
<comment type="pathway">
    <text evidence="1">Bacterial outer membrane biogenesis; lipopolysaccharide biosynthesis.</text>
</comment>
<comment type="subcellular location">
    <subcellularLocation>
        <location evidence="1">Cytoplasm</location>
    </subcellularLocation>
</comment>
<comment type="similarity">
    <text evidence="1">Belongs to the KdsA family.</text>
</comment>
<evidence type="ECO:0000255" key="1">
    <source>
        <dbReference type="HAMAP-Rule" id="MF_00056"/>
    </source>
</evidence>
<evidence type="ECO:0007829" key="2">
    <source>
        <dbReference type="PDB" id="6MDY"/>
    </source>
</evidence>
<dbReference type="EC" id="2.5.1.55" evidence="1"/>
<dbReference type="EMBL" id="AE017354">
    <property type="protein sequence ID" value="AAU27268.1"/>
    <property type="molecule type" value="Genomic_DNA"/>
</dbReference>
<dbReference type="RefSeq" id="WP_010946916.1">
    <property type="nucleotide sequence ID" value="NC_002942.5"/>
</dbReference>
<dbReference type="RefSeq" id="YP_095215.1">
    <property type="nucleotide sequence ID" value="NC_002942.5"/>
</dbReference>
<dbReference type="PDB" id="6MDY">
    <property type="method" value="X-ray"/>
    <property type="resolution" value="2.55 A"/>
    <property type="chains" value="A/B/C/D=1-274"/>
</dbReference>
<dbReference type="PDBsum" id="6MDY"/>
<dbReference type="SMR" id="Q5ZWA3"/>
<dbReference type="STRING" id="272624.lpg1182"/>
<dbReference type="PaxDb" id="272624-lpg1182"/>
<dbReference type="GeneID" id="57035172"/>
<dbReference type="KEGG" id="lpn:lpg1182"/>
<dbReference type="PATRIC" id="fig|272624.6.peg.1245"/>
<dbReference type="eggNOG" id="COG2877">
    <property type="taxonomic scope" value="Bacteria"/>
</dbReference>
<dbReference type="HOGENOM" id="CLU_036666_0_0_6"/>
<dbReference type="OrthoDB" id="9776934at2"/>
<dbReference type="UniPathway" id="UPA00030"/>
<dbReference type="UniPathway" id="UPA00357">
    <property type="reaction ID" value="UER00474"/>
</dbReference>
<dbReference type="Proteomes" id="UP000000609">
    <property type="component" value="Chromosome"/>
</dbReference>
<dbReference type="GO" id="GO:0005737">
    <property type="term" value="C:cytoplasm"/>
    <property type="evidence" value="ECO:0007669"/>
    <property type="project" value="UniProtKB-SubCell"/>
</dbReference>
<dbReference type="GO" id="GO:0008676">
    <property type="term" value="F:3-deoxy-8-phosphooctulonate synthase activity"/>
    <property type="evidence" value="ECO:0007669"/>
    <property type="project" value="UniProtKB-UniRule"/>
</dbReference>
<dbReference type="GO" id="GO:0019294">
    <property type="term" value="P:keto-3-deoxy-D-manno-octulosonic acid biosynthetic process"/>
    <property type="evidence" value="ECO:0007669"/>
    <property type="project" value="UniProtKB-UniRule"/>
</dbReference>
<dbReference type="Gene3D" id="3.20.20.70">
    <property type="entry name" value="Aldolase class I"/>
    <property type="match status" value="1"/>
</dbReference>
<dbReference type="HAMAP" id="MF_00056">
    <property type="entry name" value="KDO8P_synth"/>
    <property type="match status" value="1"/>
</dbReference>
<dbReference type="InterPro" id="IPR013785">
    <property type="entry name" value="Aldolase_TIM"/>
</dbReference>
<dbReference type="InterPro" id="IPR006218">
    <property type="entry name" value="DAHP1/KDSA"/>
</dbReference>
<dbReference type="InterPro" id="IPR006269">
    <property type="entry name" value="KDO8P_synthase"/>
</dbReference>
<dbReference type="NCBIfam" id="TIGR01362">
    <property type="entry name" value="KDO8P_synth"/>
    <property type="match status" value="1"/>
</dbReference>
<dbReference type="NCBIfam" id="NF003543">
    <property type="entry name" value="PRK05198.1"/>
    <property type="match status" value="1"/>
</dbReference>
<dbReference type="PANTHER" id="PTHR21057">
    <property type="entry name" value="PHOSPHO-2-DEHYDRO-3-DEOXYHEPTONATE ALDOLASE"/>
    <property type="match status" value="1"/>
</dbReference>
<dbReference type="Pfam" id="PF00793">
    <property type="entry name" value="DAHP_synth_1"/>
    <property type="match status" value="1"/>
</dbReference>
<dbReference type="SUPFAM" id="SSF51569">
    <property type="entry name" value="Aldolase"/>
    <property type="match status" value="1"/>
</dbReference>
<accession>Q5ZWA3</accession>
<keyword id="KW-0002">3D-structure</keyword>
<keyword id="KW-0963">Cytoplasm</keyword>
<keyword id="KW-0448">Lipopolysaccharide biosynthesis</keyword>
<keyword id="KW-1185">Reference proteome</keyword>
<keyword id="KW-0808">Transferase</keyword>
<gene>
    <name evidence="1" type="primary">kdsA</name>
    <name type="ordered locus">lpg1182</name>
</gene>
<organism>
    <name type="scientific">Legionella pneumophila subsp. pneumophila (strain Philadelphia 1 / ATCC 33152 / DSM 7513)</name>
    <dbReference type="NCBI Taxonomy" id="272624"/>
    <lineage>
        <taxon>Bacteria</taxon>
        <taxon>Pseudomonadati</taxon>
        <taxon>Pseudomonadota</taxon>
        <taxon>Gammaproteobacteria</taxon>
        <taxon>Legionellales</taxon>
        <taxon>Legionellaceae</taxon>
        <taxon>Legionella</taxon>
    </lineage>
</organism>
<name>KDSA_LEGPH</name>
<protein>
    <recommendedName>
        <fullName evidence="1">2-dehydro-3-deoxyphosphooctonate aldolase</fullName>
        <ecNumber evidence="1">2.5.1.55</ecNumber>
    </recommendedName>
    <alternativeName>
        <fullName evidence="1">3-deoxy-D-manno-octulosonic acid 8-phosphate synthase</fullName>
    </alternativeName>
    <alternativeName>
        <fullName evidence="1">KDO-8-phosphate synthase</fullName>
        <shortName evidence="1">KDO 8-P synthase</shortName>
        <shortName evidence="1">KDOPS</shortName>
    </alternativeName>
    <alternativeName>
        <fullName evidence="1">Phospho-2-dehydro-3-deoxyoctonate aldolase</fullName>
    </alternativeName>
</protein>